<accession>B7I2M0</accession>
<protein>
    <recommendedName>
        <fullName evidence="1">Glycerol-3-phosphate dehydrogenase [NAD(P)+]</fullName>
        <ecNumber evidence="1">1.1.1.94</ecNumber>
    </recommendedName>
    <alternativeName>
        <fullName evidence="1">NAD(P)(+)-dependent glycerol-3-phosphate dehydrogenase</fullName>
    </alternativeName>
    <alternativeName>
        <fullName evidence="1">NAD(P)H-dependent dihydroxyacetone-phosphate reductase</fullName>
    </alternativeName>
</protein>
<evidence type="ECO:0000255" key="1">
    <source>
        <dbReference type="HAMAP-Rule" id="MF_00394"/>
    </source>
</evidence>
<gene>
    <name evidence="1" type="primary">gpsA</name>
    <name type="ordered locus">AB57_2614</name>
</gene>
<comment type="function">
    <text evidence="1">Catalyzes the reduction of the glycolytic intermediate dihydroxyacetone phosphate (DHAP) to sn-glycerol 3-phosphate (G3P), the key precursor for phospholipid synthesis.</text>
</comment>
<comment type="catalytic activity">
    <reaction evidence="1">
        <text>sn-glycerol 3-phosphate + NAD(+) = dihydroxyacetone phosphate + NADH + H(+)</text>
        <dbReference type="Rhea" id="RHEA:11092"/>
        <dbReference type="ChEBI" id="CHEBI:15378"/>
        <dbReference type="ChEBI" id="CHEBI:57540"/>
        <dbReference type="ChEBI" id="CHEBI:57597"/>
        <dbReference type="ChEBI" id="CHEBI:57642"/>
        <dbReference type="ChEBI" id="CHEBI:57945"/>
        <dbReference type="EC" id="1.1.1.94"/>
    </reaction>
    <physiologicalReaction direction="right-to-left" evidence="1">
        <dbReference type="Rhea" id="RHEA:11094"/>
    </physiologicalReaction>
</comment>
<comment type="catalytic activity">
    <reaction evidence="1">
        <text>sn-glycerol 3-phosphate + NADP(+) = dihydroxyacetone phosphate + NADPH + H(+)</text>
        <dbReference type="Rhea" id="RHEA:11096"/>
        <dbReference type="ChEBI" id="CHEBI:15378"/>
        <dbReference type="ChEBI" id="CHEBI:57597"/>
        <dbReference type="ChEBI" id="CHEBI:57642"/>
        <dbReference type="ChEBI" id="CHEBI:57783"/>
        <dbReference type="ChEBI" id="CHEBI:58349"/>
        <dbReference type="EC" id="1.1.1.94"/>
    </reaction>
    <physiologicalReaction direction="right-to-left" evidence="1">
        <dbReference type="Rhea" id="RHEA:11098"/>
    </physiologicalReaction>
</comment>
<comment type="pathway">
    <text evidence="1">Membrane lipid metabolism; glycerophospholipid metabolism.</text>
</comment>
<comment type="subcellular location">
    <subcellularLocation>
        <location evidence="1">Cytoplasm</location>
    </subcellularLocation>
</comment>
<comment type="similarity">
    <text evidence="1">Belongs to the NAD-dependent glycerol-3-phosphate dehydrogenase family.</text>
</comment>
<keyword id="KW-0963">Cytoplasm</keyword>
<keyword id="KW-0444">Lipid biosynthesis</keyword>
<keyword id="KW-0443">Lipid metabolism</keyword>
<keyword id="KW-0520">NAD</keyword>
<keyword id="KW-0521">NADP</keyword>
<keyword id="KW-0547">Nucleotide-binding</keyword>
<keyword id="KW-0560">Oxidoreductase</keyword>
<keyword id="KW-0594">Phospholipid biosynthesis</keyword>
<keyword id="KW-1208">Phospholipid metabolism</keyword>
<name>GPDA_ACIB5</name>
<reference key="1">
    <citation type="journal article" date="2008" name="J. Bacteriol.">
        <title>Comparative genome sequence analysis of multidrug-resistant Acinetobacter baumannii.</title>
        <authorList>
            <person name="Adams M.D."/>
            <person name="Goglin K."/>
            <person name="Molyneaux N."/>
            <person name="Hujer K.M."/>
            <person name="Lavender H."/>
            <person name="Jamison J.J."/>
            <person name="MacDonald I.J."/>
            <person name="Martin K.M."/>
            <person name="Russo T."/>
            <person name="Campagnari A.A."/>
            <person name="Hujer A.M."/>
            <person name="Bonomo R.A."/>
            <person name="Gill S.R."/>
        </authorList>
    </citation>
    <scope>NUCLEOTIDE SEQUENCE [LARGE SCALE GENOMIC DNA]</scope>
    <source>
        <strain>AB0057</strain>
    </source>
</reference>
<feature type="chain" id="PRO_1000123106" description="Glycerol-3-phosphate dehydrogenase [NAD(P)+]">
    <location>
        <begin position="1"/>
        <end position="357"/>
    </location>
</feature>
<feature type="active site" description="Proton acceptor" evidence="1">
    <location>
        <position position="207"/>
    </location>
</feature>
<feature type="binding site" evidence="1">
    <location>
        <position position="30"/>
    </location>
    <ligand>
        <name>NADPH</name>
        <dbReference type="ChEBI" id="CHEBI:57783"/>
    </ligand>
</feature>
<feature type="binding site" evidence="1">
    <location>
        <position position="31"/>
    </location>
    <ligand>
        <name>NADPH</name>
        <dbReference type="ChEBI" id="CHEBI:57783"/>
    </ligand>
</feature>
<feature type="binding site" evidence="1">
    <location>
        <position position="51"/>
    </location>
    <ligand>
        <name>NADPH</name>
        <dbReference type="ChEBI" id="CHEBI:57783"/>
    </ligand>
</feature>
<feature type="binding site" evidence="1">
    <location>
        <position position="124"/>
    </location>
    <ligand>
        <name>NADPH</name>
        <dbReference type="ChEBI" id="CHEBI:57783"/>
    </ligand>
</feature>
<feature type="binding site" evidence="1">
    <location>
        <position position="124"/>
    </location>
    <ligand>
        <name>sn-glycerol 3-phosphate</name>
        <dbReference type="ChEBI" id="CHEBI:57597"/>
    </ligand>
</feature>
<feature type="binding site" evidence="1">
    <location>
        <position position="152"/>
    </location>
    <ligand>
        <name>sn-glycerol 3-phosphate</name>
        <dbReference type="ChEBI" id="CHEBI:57597"/>
    </ligand>
</feature>
<feature type="binding site" evidence="1">
    <location>
        <position position="156"/>
    </location>
    <ligand>
        <name>NADPH</name>
        <dbReference type="ChEBI" id="CHEBI:57783"/>
    </ligand>
</feature>
<feature type="binding site" evidence="1">
    <location>
        <position position="207"/>
    </location>
    <ligand>
        <name>sn-glycerol 3-phosphate</name>
        <dbReference type="ChEBI" id="CHEBI:57597"/>
    </ligand>
</feature>
<feature type="binding site" evidence="1">
    <location>
        <position position="260"/>
    </location>
    <ligand>
        <name>sn-glycerol 3-phosphate</name>
        <dbReference type="ChEBI" id="CHEBI:57597"/>
    </ligand>
</feature>
<feature type="binding site" evidence="1">
    <location>
        <position position="270"/>
    </location>
    <ligand>
        <name>sn-glycerol 3-phosphate</name>
        <dbReference type="ChEBI" id="CHEBI:57597"/>
    </ligand>
</feature>
<feature type="binding site" evidence="1">
    <location>
        <position position="271"/>
    </location>
    <ligand>
        <name>NADPH</name>
        <dbReference type="ChEBI" id="CHEBI:57783"/>
    </ligand>
</feature>
<feature type="binding site" evidence="1">
    <location>
        <position position="271"/>
    </location>
    <ligand>
        <name>sn-glycerol 3-phosphate</name>
        <dbReference type="ChEBI" id="CHEBI:57597"/>
    </ligand>
</feature>
<feature type="binding site" evidence="1">
    <location>
        <position position="272"/>
    </location>
    <ligand>
        <name>sn-glycerol 3-phosphate</name>
        <dbReference type="ChEBI" id="CHEBI:57597"/>
    </ligand>
</feature>
<feature type="binding site" evidence="1">
    <location>
        <position position="297"/>
    </location>
    <ligand>
        <name>NADPH</name>
        <dbReference type="ChEBI" id="CHEBI:57783"/>
    </ligand>
</feature>
<organism>
    <name type="scientific">Acinetobacter baumannii (strain AB0057)</name>
    <dbReference type="NCBI Taxonomy" id="480119"/>
    <lineage>
        <taxon>Bacteria</taxon>
        <taxon>Pseudomonadati</taxon>
        <taxon>Pseudomonadota</taxon>
        <taxon>Gammaproteobacteria</taxon>
        <taxon>Moraxellales</taxon>
        <taxon>Moraxellaceae</taxon>
        <taxon>Acinetobacter</taxon>
        <taxon>Acinetobacter calcoaceticus/baumannii complex</taxon>
    </lineage>
</organism>
<sequence>MAEFKFTDLVEPVAVDKKTALRITVLGGGSFGTAMANLAARNGCDTMIWIRDAETAEEINKTHINKRYLPDFTLESSLRAVSDLEQAVCDRDIILVAIPSHSFRDVLKQIAPYITAQAVVSLTKGVEAKTFSFMSDIIREELPEVPYGVLSGPNLAKEIMAGMPSGTVIASDSELVRYAVQHALHSALFRVFGSDDVHGVELGGALKNIYAVAMGIGAAYKIGENTKSMILTRALAEMSRFAVKQGANPLTFLGLSGVGDLFATCNSPLSRNYQIGYALGSGKTLEQASKELGQTAEGINTIVQVRGKAQELDVYMPITNALYEVIFEGAPPLNIALSLMKNGHRSDVEFVLPHHEV</sequence>
<dbReference type="EC" id="1.1.1.94" evidence="1"/>
<dbReference type="EMBL" id="CP001182">
    <property type="protein sequence ID" value="ACJ42722.1"/>
    <property type="molecule type" value="Genomic_DNA"/>
</dbReference>
<dbReference type="RefSeq" id="WP_000807316.1">
    <property type="nucleotide sequence ID" value="NC_011586.2"/>
</dbReference>
<dbReference type="SMR" id="B7I2M0"/>
<dbReference type="KEGG" id="abn:AB57_2614"/>
<dbReference type="HOGENOM" id="CLU_033449_0_2_6"/>
<dbReference type="UniPathway" id="UPA00940"/>
<dbReference type="Proteomes" id="UP000007094">
    <property type="component" value="Chromosome"/>
</dbReference>
<dbReference type="GO" id="GO:0005829">
    <property type="term" value="C:cytosol"/>
    <property type="evidence" value="ECO:0007669"/>
    <property type="project" value="TreeGrafter"/>
</dbReference>
<dbReference type="GO" id="GO:0047952">
    <property type="term" value="F:glycerol-3-phosphate dehydrogenase [NAD(P)+] activity"/>
    <property type="evidence" value="ECO:0007669"/>
    <property type="project" value="UniProtKB-UniRule"/>
</dbReference>
<dbReference type="GO" id="GO:0051287">
    <property type="term" value="F:NAD binding"/>
    <property type="evidence" value="ECO:0007669"/>
    <property type="project" value="InterPro"/>
</dbReference>
<dbReference type="GO" id="GO:0005975">
    <property type="term" value="P:carbohydrate metabolic process"/>
    <property type="evidence" value="ECO:0007669"/>
    <property type="project" value="InterPro"/>
</dbReference>
<dbReference type="GO" id="GO:0046167">
    <property type="term" value="P:glycerol-3-phosphate biosynthetic process"/>
    <property type="evidence" value="ECO:0007669"/>
    <property type="project" value="UniProtKB-UniRule"/>
</dbReference>
<dbReference type="GO" id="GO:0046168">
    <property type="term" value="P:glycerol-3-phosphate catabolic process"/>
    <property type="evidence" value="ECO:0007669"/>
    <property type="project" value="InterPro"/>
</dbReference>
<dbReference type="GO" id="GO:0046474">
    <property type="term" value="P:glycerophospholipid biosynthetic process"/>
    <property type="evidence" value="ECO:0007669"/>
    <property type="project" value="TreeGrafter"/>
</dbReference>
<dbReference type="FunFam" id="1.10.1040.10:FF:000001">
    <property type="entry name" value="Glycerol-3-phosphate dehydrogenase [NAD(P)+]"/>
    <property type="match status" value="1"/>
</dbReference>
<dbReference type="FunFam" id="3.40.50.720:FF:000019">
    <property type="entry name" value="Glycerol-3-phosphate dehydrogenase [NAD(P)+]"/>
    <property type="match status" value="1"/>
</dbReference>
<dbReference type="Gene3D" id="1.10.1040.10">
    <property type="entry name" value="N-(1-d-carboxylethyl)-l-norvaline Dehydrogenase, domain 2"/>
    <property type="match status" value="1"/>
</dbReference>
<dbReference type="Gene3D" id="3.40.50.720">
    <property type="entry name" value="NAD(P)-binding Rossmann-like Domain"/>
    <property type="match status" value="1"/>
</dbReference>
<dbReference type="HAMAP" id="MF_00394">
    <property type="entry name" value="NAD_Glyc3P_dehydrog"/>
    <property type="match status" value="1"/>
</dbReference>
<dbReference type="InterPro" id="IPR008927">
    <property type="entry name" value="6-PGluconate_DH-like_C_sf"/>
</dbReference>
<dbReference type="InterPro" id="IPR013328">
    <property type="entry name" value="6PGD_dom2"/>
</dbReference>
<dbReference type="InterPro" id="IPR006168">
    <property type="entry name" value="G3P_DH_NAD-dep"/>
</dbReference>
<dbReference type="InterPro" id="IPR006109">
    <property type="entry name" value="G3P_DH_NAD-dep_C"/>
</dbReference>
<dbReference type="InterPro" id="IPR011128">
    <property type="entry name" value="G3P_DH_NAD-dep_N"/>
</dbReference>
<dbReference type="InterPro" id="IPR036291">
    <property type="entry name" value="NAD(P)-bd_dom_sf"/>
</dbReference>
<dbReference type="NCBIfam" id="NF000940">
    <property type="entry name" value="PRK00094.1-2"/>
    <property type="match status" value="1"/>
</dbReference>
<dbReference type="NCBIfam" id="NF000942">
    <property type="entry name" value="PRK00094.1-4"/>
    <property type="match status" value="1"/>
</dbReference>
<dbReference type="NCBIfam" id="NF000944">
    <property type="entry name" value="PRK00094.2-2"/>
    <property type="match status" value="1"/>
</dbReference>
<dbReference type="NCBIfam" id="NF000946">
    <property type="entry name" value="PRK00094.2-4"/>
    <property type="match status" value="1"/>
</dbReference>
<dbReference type="PANTHER" id="PTHR11728">
    <property type="entry name" value="GLYCEROL-3-PHOSPHATE DEHYDROGENASE"/>
    <property type="match status" value="1"/>
</dbReference>
<dbReference type="PANTHER" id="PTHR11728:SF1">
    <property type="entry name" value="GLYCEROL-3-PHOSPHATE DEHYDROGENASE [NAD(+)] 2, CHLOROPLASTIC"/>
    <property type="match status" value="1"/>
</dbReference>
<dbReference type="Pfam" id="PF07479">
    <property type="entry name" value="NAD_Gly3P_dh_C"/>
    <property type="match status" value="1"/>
</dbReference>
<dbReference type="Pfam" id="PF01210">
    <property type="entry name" value="NAD_Gly3P_dh_N"/>
    <property type="match status" value="1"/>
</dbReference>
<dbReference type="PIRSF" id="PIRSF000114">
    <property type="entry name" value="Glycerol-3-P_dh"/>
    <property type="match status" value="1"/>
</dbReference>
<dbReference type="PRINTS" id="PR00077">
    <property type="entry name" value="GPDHDRGNASE"/>
</dbReference>
<dbReference type="SUPFAM" id="SSF48179">
    <property type="entry name" value="6-phosphogluconate dehydrogenase C-terminal domain-like"/>
    <property type="match status" value="1"/>
</dbReference>
<dbReference type="SUPFAM" id="SSF51735">
    <property type="entry name" value="NAD(P)-binding Rossmann-fold domains"/>
    <property type="match status" value="1"/>
</dbReference>
<dbReference type="PROSITE" id="PS00957">
    <property type="entry name" value="NAD_G3PDH"/>
    <property type="match status" value="1"/>
</dbReference>
<proteinExistence type="inferred from homology"/>